<gene>
    <name evidence="1" type="primary">mtnN</name>
    <name type="synonym">mtn</name>
    <name type="ordered locus">BUsg_204</name>
</gene>
<comment type="function">
    <text evidence="1">Catalyzes the irreversible cleavage of the glycosidic bond in both 5'-methylthioadenosine (MTA) and S-adenosylhomocysteine (SAH/AdoHcy) to adenine and the corresponding thioribose, 5'-methylthioribose and S-ribosylhomocysteine, respectively. Also cleaves 5'-deoxyadenosine, a toxic by-product of radical S-adenosylmethionine (SAM) enzymes, into 5-deoxyribose and adenine. Thus, is required for in vivo function of the radical SAM enzymes biotin synthase and lipoic acid synthase, that are inhibited by 5'-deoxyadenosine accumulation.</text>
</comment>
<comment type="catalytic activity">
    <reaction evidence="1">
        <text>S-adenosyl-L-homocysteine + H2O = S-(5-deoxy-D-ribos-5-yl)-L-homocysteine + adenine</text>
        <dbReference type="Rhea" id="RHEA:17805"/>
        <dbReference type="ChEBI" id="CHEBI:15377"/>
        <dbReference type="ChEBI" id="CHEBI:16708"/>
        <dbReference type="ChEBI" id="CHEBI:57856"/>
        <dbReference type="ChEBI" id="CHEBI:58195"/>
        <dbReference type="EC" id="3.2.2.9"/>
    </reaction>
</comment>
<comment type="catalytic activity">
    <reaction evidence="1">
        <text>S-methyl-5'-thioadenosine + H2O = 5-(methylsulfanyl)-D-ribose + adenine</text>
        <dbReference type="Rhea" id="RHEA:13617"/>
        <dbReference type="ChEBI" id="CHEBI:15377"/>
        <dbReference type="ChEBI" id="CHEBI:16708"/>
        <dbReference type="ChEBI" id="CHEBI:17509"/>
        <dbReference type="ChEBI" id="CHEBI:78440"/>
        <dbReference type="EC" id="3.2.2.9"/>
    </reaction>
</comment>
<comment type="catalytic activity">
    <reaction evidence="1">
        <text>5'-deoxyadenosine + H2O = 5-deoxy-D-ribose + adenine</text>
        <dbReference type="Rhea" id="RHEA:29859"/>
        <dbReference type="ChEBI" id="CHEBI:15377"/>
        <dbReference type="ChEBI" id="CHEBI:16708"/>
        <dbReference type="ChEBI" id="CHEBI:17319"/>
        <dbReference type="ChEBI" id="CHEBI:149540"/>
        <dbReference type="EC" id="3.2.2.9"/>
    </reaction>
    <physiologicalReaction direction="left-to-right" evidence="1">
        <dbReference type="Rhea" id="RHEA:29860"/>
    </physiologicalReaction>
</comment>
<comment type="pathway">
    <text evidence="1">Amino-acid biosynthesis; L-methionine biosynthesis via salvage pathway; S-methyl-5-thio-alpha-D-ribose 1-phosphate from S-methyl-5'-thioadenosine (hydrolase route): step 1/2.</text>
</comment>
<comment type="subunit">
    <text evidence="1">Homodimer.</text>
</comment>
<comment type="similarity">
    <text evidence="1">Belongs to the PNP/UDP phosphorylase family. MtnN subfamily.</text>
</comment>
<organism>
    <name type="scientific">Buchnera aphidicola subsp. Schizaphis graminum (strain Sg)</name>
    <dbReference type="NCBI Taxonomy" id="198804"/>
    <lineage>
        <taxon>Bacteria</taxon>
        <taxon>Pseudomonadati</taxon>
        <taxon>Pseudomonadota</taxon>
        <taxon>Gammaproteobacteria</taxon>
        <taxon>Enterobacterales</taxon>
        <taxon>Erwiniaceae</taxon>
        <taxon>Buchnera</taxon>
    </lineage>
</organism>
<protein>
    <recommendedName>
        <fullName evidence="1">5'-methylthioadenosine/S-adenosylhomocysteine nucleosidase</fullName>
        <shortName evidence="1">MTA/SAH nucleosidase</shortName>
        <shortName evidence="1">MTAN</shortName>
        <ecNumber evidence="1">3.2.2.9</ecNumber>
    </recommendedName>
    <alternativeName>
        <fullName evidence="1">5'-deoxyadenosine nucleosidase</fullName>
        <shortName evidence="1">DOA nucleosidase</shortName>
        <shortName evidence="1">dAdo nucleosidase</shortName>
    </alternativeName>
    <alternativeName>
        <fullName evidence="1">5'-methylthioadenosine nucleosidase</fullName>
        <shortName evidence="1">MTA nucleosidase</shortName>
    </alternativeName>
    <alternativeName>
        <fullName evidence="1">S-adenosylhomocysteine nucleosidase</fullName>
        <shortName evidence="1">AdoHcy nucleosidase</shortName>
        <shortName evidence="1">SAH nucleosidase</shortName>
        <shortName evidence="1">SRH nucleosidase</shortName>
    </alternativeName>
</protein>
<accession>O51931</accession>
<evidence type="ECO:0000255" key="1">
    <source>
        <dbReference type="HAMAP-Rule" id="MF_01684"/>
    </source>
</evidence>
<proteinExistence type="inferred from homology"/>
<dbReference type="EC" id="3.2.2.9" evidence="1"/>
<dbReference type="EMBL" id="AF012886">
    <property type="protein sequence ID" value="AAC46071.1"/>
    <property type="molecule type" value="Genomic_DNA"/>
</dbReference>
<dbReference type="EMBL" id="AE013218">
    <property type="protein sequence ID" value="AAM67768.1"/>
    <property type="molecule type" value="Genomic_DNA"/>
</dbReference>
<dbReference type="RefSeq" id="WP_011053735.1">
    <property type="nucleotide sequence ID" value="NC_004061.1"/>
</dbReference>
<dbReference type="SMR" id="O51931"/>
<dbReference type="STRING" id="198804.BUsg_204"/>
<dbReference type="GeneID" id="93003671"/>
<dbReference type="KEGG" id="bas:BUsg_204"/>
<dbReference type="eggNOG" id="COG0775">
    <property type="taxonomic scope" value="Bacteria"/>
</dbReference>
<dbReference type="HOGENOM" id="CLU_031248_2_2_6"/>
<dbReference type="UniPathway" id="UPA00904">
    <property type="reaction ID" value="UER00871"/>
</dbReference>
<dbReference type="Proteomes" id="UP000000416">
    <property type="component" value="Chromosome"/>
</dbReference>
<dbReference type="GO" id="GO:0005829">
    <property type="term" value="C:cytosol"/>
    <property type="evidence" value="ECO:0007669"/>
    <property type="project" value="TreeGrafter"/>
</dbReference>
<dbReference type="GO" id="GO:0008782">
    <property type="term" value="F:adenosylhomocysteine nucleosidase activity"/>
    <property type="evidence" value="ECO:0007669"/>
    <property type="project" value="UniProtKB-UniRule"/>
</dbReference>
<dbReference type="GO" id="GO:0008930">
    <property type="term" value="F:methylthioadenosine nucleosidase activity"/>
    <property type="evidence" value="ECO:0007669"/>
    <property type="project" value="UniProtKB-UniRule"/>
</dbReference>
<dbReference type="GO" id="GO:0019509">
    <property type="term" value="P:L-methionine salvage from methylthioadenosine"/>
    <property type="evidence" value="ECO:0007669"/>
    <property type="project" value="UniProtKB-UniRule"/>
</dbReference>
<dbReference type="GO" id="GO:0019284">
    <property type="term" value="P:L-methionine salvage from S-adenosylmethionine"/>
    <property type="evidence" value="ECO:0007669"/>
    <property type="project" value="TreeGrafter"/>
</dbReference>
<dbReference type="GO" id="GO:0046124">
    <property type="term" value="P:purine deoxyribonucleoside catabolic process"/>
    <property type="evidence" value="ECO:0007669"/>
    <property type="project" value="UniProtKB-UniRule"/>
</dbReference>
<dbReference type="CDD" id="cd09008">
    <property type="entry name" value="MTAN"/>
    <property type="match status" value="1"/>
</dbReference>
<dbReference type="Gene3D" id="3.40.50.1580">
    <property type="entry name" value="Nucleoside phosphorylase domain"/>
    <property type="match status" value="1"/>
</dbReference>
<dbReference type="HAMAP" id="MF_01684">
    <property type="entry name" value="Salvage_MtnN"/>
    <property type="match status" value="1"/>
</dbReference>
<dbReference type="InterPro" id="IPR010049">
    <property type="entry name" value="MTA_SAH_Nsdase"/>
</dbReference>
<dbReference type="InterPro" id="IPR000845">
    <property type="entry name" value="Nucleoside_phosphorylase_d"/>
</dbReference>
<dbReference type="InterPro" id="IPR035994">
    <property type="entry name" value="Nucleoside_phosphorylase_sf"/>
</dbReference>
<dbReference type="NCBIfam" id="TIGR01704">
    <property type="entry name" value="MTA_SAH-Nsdase"/>
    <property type="match status" value="1"/>
</dbReference>
<dbReference type="NCBIfam" id="NF004079">
    <property type="entry name" value="PRK05584.1"/>
    <property type="match status" value="1"/>
</dbReference>
<dbReference type="PANTHER" id="PTHR46832">
    <property type="entry name" value="5'-METHYLTHIOADENOSINE/S-ADENOSYLHOMOCYSTEINE NUCLEOSIDASE"/>
    <property type="match status" value="1"/>
</dbReference>
<dbReference type="PANTHER" id="PTHR46832:SF1">
    <property type="entry name" value="5'-METHYLTHIOADENOSINE_S-ADENOSYLHOMOCYSTEINE NUCLEOSIDASE"/>
    <property type="match status" value="1"/>
</dbReference>
<dbReference type="Pfam" id="PF01048">
    <property type="entry name" value="PNP_UDP_1"/>
    <property type="match status" value="1"/>
</dbReference>
<dbReference type="SUPFAM" id="SSF53167">
    <property type="entry name" value="Purine and uridine phosphorylases"/>
    <property type="match status" value="1"/>
</dbReference>
<reference key="1">
    <citation type="journal article" date="1998" name="Curr. Microbiol.">
        <title>Characterization of ftsZ, the cell division gene of Buchnera aphidicola (endosymbiont of aphids) and detection of the product.</title>
        <authorList>
            <person name="Baumann L."/>
            <person name="Baumann P."/>
        </authorList>
    </citation>
    <scope>NUCLEOTIDE SEQUENCE [GENOMIC DNA]</scope>
</reference>
<reference key="2">
    <citation type="journal article" date="2002" name="Science">
        <title>50 million years of genomic stasis in endosymbiotic bacteria.</title>
        <authorList>
            <person name="Tamas I."/>
            <person name="Klasson L."/>
            <person name="Canbaeck B."/>
            <person name="Naeslund A.K."/>
            <person name="Eriksson A.-S."/>
            <person name="Wernegreen J.J."/>
            <person name="Sandstroem J.P."/>
            <person name="Moran N.A."/>
            <person name="Andersson S.G.E."/>
        </authorList>
    </citation>
    <scope>NUCLEOTIDE SEQUENCE [LARGE SCALE GENOMIC DNA]</scope>
    <source>
        <strain>Sg</strain>
    </source>
</reference>
<sequence>MKIGIIGAIEQEIRKIKEIINNLKIKKIGNIKIYTGTFKKIEIFLILSGIGKVSASMSTTISINLFQPDFIINSGSAGSLNACLKIGDIIIPKKTCYYDVDLTNFGYSKGQIPEYPQTFKTNKNLREILKEIAVEFKFKFLTGLLVTGDSFIRKSNCIKKIKNQFSSAIGVDMESTAIGQVCHNFKIPFIIIKSISDLSDNNATSHFEKNIPIASLKSSKLVKLLLKKISSQNSI</sequence>
<keyword id="KW-0028">Amino-acid biosynthesis</keyword>
<keyword id="KW-0378">Hydrolase</keyword>
<keyword id="KW-0486">Methionine biosynthesis</keyword>
<feature type="chain" id="PRO_0000164437" description="5'-methylthioadenosine/S-adenosylhomocysteine nucleosidase">
    <location>
        <begin position="1"/>
        <end position="235"/>
    </location>
</feature>
<feature type="active site" description="Proton acceptor" evidence="1">
    <location>
        <position position="12"/>
    </location>
</feature>
<feature type="active site" description="Proton donor" evidence="1">
    <location>
        <position position="197"/>
    </location>
</feature>
<feature type="binding site" evidence="1">
    <location>
        <position position="78"/>
    </location>
    <ligand>
        <name>substrate</name>
    </ligand>
</feature>
<feature type="binding site" evidence="1">
    <location>
        <position position="152"/>
    </location>
    <ligand>
        <name>substrate</name>
    </ligand>
</feature>
<feature type="binding site" evidence="1">
    <location>
        <begin position="173"/>
        <end position="174"/>
    </location>
    <ligand>
        <name>substrate</name>
    </ligand>
</feature>
<name>MTNN_BUCAP</name>